<evidence type="ECO:0000269" key="1">
    <source>
    </source>
</evidence>
<evidence type="ECO:0000303" key="2">
    <source>
    </source>
</evidence>
<evidence type="ECO:0000305" key="3"/>
<protein>
    <recommendedName>
        <fullName evidence="2">Galactose-binding lectin-2</fullName>
        <shortName evidence="2">AKL-2</shortName>
    </recommendedName>
</protein>
<dbReference type="GO" id="GO:0030246">
    <property type="term" value="F:carbohydrate binding"/>
    <property type="evidence" value="ECO:0007669"/>
    <property type="project" value="UniProtKB-KW"/>
</dbReference>
<organism>
    <name type="scientific">Aplysia kurodai</name>
    <name type="common">Kuroda's sea hare</name>
    <dbReference type="NCBI Taxonomy" id="6501"/>
    <lineage>
        <taxon>Eukaryota</taxon>
        <taxon>Metazoa</taxon>
        <taxon>Spiralia</taxon>
        <taxon>Lophotrochozoa</taxon>
        <taxon>Mollusca</taxon>
        <taxon>Gastropoda</taxon>
        <taxon>Heterobranchia</taxon>
        <taxon>Euthyneura</taxon>
        <taxon>Tectipleura</taxon>
        <taxon>Aplysiida</taxon>
        <taxon>Aplysioidea</taxon>
        <taxon>Aplysiidae</taxon>
        <taxon>Aplysia</taxon>
    </lineage>
</organism>
<proteinExistence type="evidence at protein level"/>
<feature type="chain" id="PRO_0000417399" description="Galactose-binding lectin-2">
    <location>
        <begin position="1"/>
        <end position="25" status="greater than"/>
    </location>
</feature>
<feature type="non-terminal residue" evidence="2">
    <location>
        <position position="25"/>
    </location>
</feature>
<reference evidence="3" key="1">
    <citation type="journal article" date="2011" name="Protein J.">
        <title>Cytotoxicity and glycan-binding profile of a D-galactose-binding lectin from the eggs of a Japanese sea hare (Aplysia kurodai).</title>
        <authorList>
            <person name="Kawsar S.M."/>
            <person name="Matsumoto R."/>
            <person name="Fujii Y."/>
            <person name="Matsuoka H."/>
            <person name="Masuda N."/>
            <person name="Chihiro I."/>
            <person name="Yasumitsu H."/>
            <person name="Kanaly R.A."/>
            <person name="Sugawara S."/>
            <person name="Hosono M."/>
            <person name="Nitta K."/>
            <person name="Ishizaki N."/>
            <person name="Dogasaki C."/>
            <person name="Hamako J."/>
            <person name="Matsui T."/>
            <person name="Ozeki Y."/>
        </authorList>
    </citation>
    <scope>PROTEIN SEQUENCE</scope>
    <scope>FUNCTION</scope>
    <scope>BIOPHYSICOCHEMICAL PROPERTIES</scope>
    <scope>SUBUNIT</scope>
    <scope>GLYCOSYLATION</scope>
    <source>
        <tissue evidence="1">Egg</tissue>
    </source>
</reference>
<sequence length="25" mass="2700">VLYQAVNVFSMDVIDVNSAAPKTCD</sequence>
<name>LECG2_APLKU</name>
<keyword id="KW-0903">Direct protein sequencing</keyword>
<keyword id="KW-0325">Glycoprotein</keyword>
<keyword id="KW-0348">Hemagglutinin</keyword>
<keyword id="KW-0430">Lectin</keyword>
<comment type="function">
    <text evidence="1">D-galactose specific lectin. Binds in decreasing order of affinity: melibiose, N-acetyllactosamine, D-galacturonic acid, D-galactose, methyl-alpha-D-galactoside, D-galactose, methyl-alpha-D-galactopyranoside, methyl-beta-D-galactopyranoside and lactose. Binds also the glycoproteins globotriose, asialofetuin and mucin. Possesses glycan-dependent cytotoxic activity against Burkitt's lymphoma Raji cells and erythroleukemia K562 cells. Has calcium-independent hemagglutinating activity towards human erythrocytes.</text>
</comment>
<comment type="biophysicochemical properties">
    <phDependence>
        <text evidence="1">Hemagglutinating activity is stable over the pH range 4.0-12.0 but decreases below pH 3.</text>
    </phDependence>
    <temperatureDependence>
        <text evidence="1">Hemagglutinating activity is stable when incubated over the range of 20-70 degrees Celsius for 60 minutes but is almost lost after incubation for 60 minutes at 80 degrees Celsius.</text>
    </temperatureDependence>
</comment>
<comment type="subunit">
    <text evidence="1">Homodimer.</text>
</comment>
<comment type="PTM">
    <text evidence="1">N-glycosylated.</text>
</comment>
<accession>B3EWI0</accession>